<gene>
    <name evidence="6" type="primary">nifF</name>
</gene>
<keyword id="KW-0002">3D-structure</keyword>
<keyword id="KW-0903">Direct protein sequencing</keyword>
<keyword id="KW-0249">Electron transport</keyword>
<keyword id="KW-0285">Flavoprotein</keyword>
<keyword id="KW-0288">FMN</keyword>
<keyword id="KW-0535">Nitrogen fixation</keyword>
<keyword id="KW-0813">Transport</keyword>
<organism>
    <name type="scientific">Azotobacter vinelandii</name>
    <dbReference type="NCBI Taxonomy" id="354"/>
    <lineage>
        <taxon>Bacteria</taxon>
        <taxon>Pseudomonadati</taxon>
        <taxon>Pseudomonadota</taxon>
        <taxon>Gammaproteobacteria</taxon>
        <taxon>Pseudomonadales</taxon>
        <taxon>Pseudomonadaceae</taxon>
        <taxon>Azotobacter</taxon>
    </lineage>
</organism>
<proteinExistence type="evidence at protein level"/>
<sequence>MAKIGLFFGSNTGKTRKVAKSIKKRFDDETMSDALNVNRVSAEDFAQYQFLILGTPTLGEGELPGLSSDCENESWEEFLPKIEGLDFSGKTVALFGLGDQVGYPENYLDALGELYSFFKDRGAKIVGSWSTDGYEFESSEAVVDGKFVGLALDLDNQSGKTDERVAAWLAQIAPEFGLSL</sequence>
<evidence type="ECO:0000255" key="1">
    <source>
        <dbReference type="PROSITE-ProRule" id="PRU00088"/>
    </source>
</evidence>
<evidence type="ECO:0000269" key="2">
    <source>
    </source>
</evidence>
<evidence type="ECO:0000269" key="3">
    <source>
    </source>
</evidence>
<evidence type="ECO:0000269" key="4">
    <source>
    </source>
</evidence>
<evidence type="ECO:0000303" key="5">
    <source>
    </source>
</evidence>
<evidence type="ECO:0000303" key="6">
    <source>
    </source>
</evidence>
<evidence type="ECO:0000305" key="7"/>
<evidence type="ECO:0007744" key="8">
    <source>
        <dbReference type="PDB" id="1YOB"/>
    </source>
</evidence>
<evidence type="ECO:0007829" key="9">
    <source>
        <dbReference type="PDB" id="1YOB"/>
    </source>
</evidence>
<evidence type="ECO:0007829" key="10">
    <source>
        <dbReference type="PDB" id="5K9B"/>
    </source>
</evidence>
<accession>P00324</accession>
<comment type="function">
    <text evidence="3">Flavodoxins are low-potential electron donors to a number of redox enzymes. NifF is the electron donor to nitrogenase, and is thus implicated in nitrogen fixation. Does not function as an electron donor to nitrite reductase.</text>
</comment>
<comment type="cofactor">
    <cofactor evidence="2 3">
        <name>FMN</name>
        <dbReference type="ChEBI" id="CHEBI:58210"/>
    </cofactor>
</comment>
<comment type="biophysicochemical properties">
    <redoxPotential>
        <text evidence="3">E(0) is -493 mV. It is the mid-point potential of the semiquinone/hydroquinone redox couple (SQ/HQ) of AvFld 2.</text>
    </redoxPotential>
</comment>
<comment type="induction">
    <text evidence="3">Is the predominant flavodoxin expressed when A.vinelandii is grown on N(2) as nitrogen source. Is also synthesized during growth on nitrate, but in less abundance than AvFld 1.</text>
</comment>
<comment type="mass spectrometry"/>
<comment type="similarity">
    <text evidence="7">Belongs to the flavodoxin family.</text>
</comment>
<dbReference type="EMBL" id="M20568">
    <property type="protein sequence ID" value="AAA64735.1"/>
    <property type="molecule type" value="Genomic_DNA"/>
</dbReference>
<dbReference type="EMBL" id="J03519">
    <property type="protein sequence ID" value="AAA22154.1"/>
    <property type="molecule type" value="Genomic_DNA"/>
</dbReference>
<dbReference type="PIR" id="A29935">
    <property type="entry name" value="FXAVEP"/>
</dbReference>
<dbReference type="RefSeq" id="WP_012698862.1">
    <property type="nucleotide sequence ID" value="NZ_FPKM01000020.1"/>
</dbReference>
<dbReference type="PDB" id="1YOB">
    <property type="method" value="X-ray"/>
    <property type="resolution" value="2.25 A"/>
    <property type="chains" value="A/B=2-180"/>
</dbReference>
<dbReference type="PDB" id="5K9B">
    <property type="method" value="X-ray"/>
    <property type="resolution" value="1.17 A"/>
    <property type="chains" value="A=1-180"/>
</dbReference>
<dbReference type="PDBsum" id="1YOB"/>
<dbReference type="PDBsum" id="5K9B"/>
<dbReference type="BMRB" id="P00324"/>
<dbReference type="SMR" id="P00324"/>
<dbReference type="OMA" id="CENESWE"/>
<dbReference type="EvolutionaryTrace" id="P00324"/>
<dbReference type="GO" id="GO:0009055">
    <property type="term" value="F:electron transfer activity"/>
    <property type="evidence" value="ECO:0007669"/>
    <property type="project" value="InterPro"/>
</dbReference>
<dbReference type="GO" id="GO:0010181">
    <property type="term" value="F:FMN binding"/>
    <property type="evidence" value="ECO:0007669"/>
    <property type="project" value="InterPro"/>
</dbReference>
<dbReference type="GO" id="GO:0016655">
    <property type="term" value="F:oxidoreductase activity, acting on NAD(P)H, quinone or similar compound as acceptor"/>
    <property type="evidence" value="ECO:0007669"/>
    <property type="project" value="UniProtKB-ARBA"/>
</dbReference>
<dbReference type="GO" id="GO:0009399">
    <property type="term" value="P:nitrogen fixation"/>
    <property type="evidence" value="ECO:0007669"/>
    <property type="project" value="UniProtKB-KW"/>
</dbReference>
<dbReference type="Gene3D" id="3.40.50.360">
    <property type="match status" value="1"/>
</dbReference>
<dbReference type="InterPro" id="IPR001094">
    <property type="entry name" value="Flavdoxin-like"/>
</dbReference>
<dbReference type="InterPro" id="IPR050619">
    <property type="entry name" value="Flavodoxin"/>
</dbReference>
<dbReference type="InterPro" id="IPR008254">
    <property type="entry name" value="Flavodoxin/NO_synth"/>
</dbReference>
<dbReference type="InterPro" id="IPR001226">
    <property type="entry name" value="Flavodoxin_CS"/>
</dbReference>
<dbReference type="InterPro" id="IPR010086">
    <property type="entry name" value="Flavodoxin_lc"/>
</dbReference>
<dbReference type="InterPro" id="IPR029039">
    <property type="entry name" value="Flavoprotein-like_sf"/>
</dbReference>
<dbReference type="NCBIfam" id="TIGR01752">
    <property type="entry name" value="flav_long"/>
    <property type="match status" value="1"/>
</dbReference>
<dbReference type="NCBIfam" id="NF006738">
    <property type="entry name" value="PRK09267.1-4"/>
    <property type="match status" value="1"/>
</dbReference>
<dbReference type="NCBIfam" id="NF006739">
    <property type="entry name" value="PRK09267.1-5"/>
    <property type="match status" value="1"/>
</dbReference>
<dbReference type="PANTHER" id="PTHR42809:SF1">
    <property type="entry name" value="FLAVODOXIN 1"/>
    <property type="match status" value="1"/>
</dbReference>
<dbReference type="PANTHER" id="PTHR42809">
    <property type="entry name" value="FLAVODOXIN 2"/>
    <property type="match status" value="1"/>
</dbReference>
<dbReference type="Pfam" id="PF00258">
    <property type="entry name" value="Flavodoxin_1"/>
    <property type="match status" value="1"/>
</dbReference>
<dbReference type="PIRSF" id="PIRSF038996">
    <property type="entry name" value="FldA"/>
    <property type="match status" value="1"/>
</dbReference>
<dbReference type="PRINTS" id="PR00369">
    <property type="entry name" value="FLAVODOXIN"/>
</dbReference>
<dbReference type="SUPFAM" id="SSF52218">
    <property type="entry name" value="Flavoproteins"/>
    <property type="match status" value="1"/>
</dbReference>
<dbReference type="PROSITE" id="PS00201">
    <property type="entry name" value="FLAVODOXIN"/>
    <property type="match status" value="1"/>
</dbReference>
<dbReference type="PROSITE" id="PS50902">
    <property type="entry name" value="FLAVODOXIN_LIKE"/>
    <property type="match status" value="1"/>
</dbReference>
<name>FLAV_AZOVI</name>
<reference key="1">
    <citation type="journal article" date="1989" name="J. Bacteriol.">
        <title>Physical and genetic map of the major nif gene cluster from Azotobacter vinelandii.</title>
        <authorList>
            <person name="Jacobson M.R."/>
            <person name="Brigle K.E."/>
            <person name="Bennett L.T."/>
            <person name="Setterquist R.A."/>
            <person name="Wilson M.S."/>
            <person name="Cash V.L."/>
            <person name="Beynon J."/>
            <person name="Newton W.E."/>
            <person name="Dean D.R."/>
        </authorList>
    </citation>
    <scope>NUCLEOTIDE SEQUENCE [GENOMIC DNA]</scope>
    <source>
        <strain>ATCC 13705 / OP1 / DSM 366 / NCIMB 11614 / LMG 3878 / UW</strain>
    </source>
</reference>
<reference key="2">
    <citation type="journal article" date="1988" name="J. Biol. Chem.">
        <title>Isolation, sequencing, and mutagenesis of the nifF gene encoding flavodoxin from Azotobacter vinelandii.</title>
        <authorList>
            <person name="Bennett L."/>
            <person name="Jacobson M."/>
            <person name="Dean D.R."/>
        </authorList>
    </citation>
    <scope>NUCLEOTIDE SEQUENCE [GENOMIC DNA]</scope>
</reference>
<reference key="3">
    <citation type="journal article" date="1977" name="Biochemistry">
        <title>Complete amino acid sequence of azotoflavin, a flavodoxin from Azotobacter vinelandii.</title>
        <authorList>
            <person name="Tanaka M."/>
            <person name="Haniu M."/>
            <person name="Yasunobu K.T."/>
            <person name="Yoch D.C."/>
        </authorList>
    </citation>
    <scope>PROTEIN SEQUENCE OF 2-180</scope>
    <source>
        <strain>ATCC 13705 / OP1 / DSM 366 / NCIMB 11614 / LMG 3878 / UW</strain>
    </source>
</reference>
<reference key="4">
    <citation type="journal article" date="1996" name="Biochem. J.">
        <title>Flavodoxin 1 of Azotobacter vinelandii: characterization and role in electron donation to purified assimilatory nitrate reductase.</title>
        <authorList>
            <person name="Gangeswaran R."/>
            <person name="Eady R.R."/>
        </authorList>
    </citation>
    <scope>PROTEIN SEQUENCE OF 2-21</scope>
    <scope>MASS SPECTROMETRY</scope>
    <scope>FUNCTION</scope>
    <scope>COFACTOR</scope>
    <scope>INDUCTION</scope>
    <scope>BIOPHYSICOCHEMICAL PROPERTIES</scope>
    <source>
        <strain>OP / UW136</strain>
    </source>
</reference>
<reference key="5">
    <citation type="journal article" date="1998" name="Protein Sci.">
        <title>Apparent local stability of the secondary structure of Azotobacter vinelandii holoflavodoxin II as probed by hydrogen exchange: implications for redox potential regulation and flavodoxin folding.</title>
        <authorList>
            <person name="Steensma E."/>
            <person name="Nijman M.J.M."/>
            <person name="Bollen Y.J.M."/>
            <person name="de Jager P.A."/>
            <person name="van den Berg W.A.M."/>
            <person name="van Dongen W.M.A.M."/>
            <person name="van Mierlo C.P.M."/>
        </authorList>
    </citation>
    <scope>STRUCTURE BY NMR</scope>
    <source>
        <strain>ATCC 478 / DSM 2289 / BCRC 14361 / JCM 21475 / KCTC 12137 / NBRC 102612 / NCIMB 12096 / NRRL B-14641 / VKM B-1617 / NRS 16</strain>
    </source>
</reference>
<reference key="6">
    <citation type="journal article" date="2005" name="Protein Sci.">
        <title>A crystallographic study of Cys69Ala flavodoxin II from Azotobacter vinelandii: structural determinants of redox potential.</title>
        <authorList>
            <person name="Alagaratnam S."/>
            <person name="van Pouderoyen G."/>
            <person name="Pijning T."/>
            <person name="Dijkstra B.W."/>
            <person name="Cavazzini D."/>
            <person name="Rossi G.L."/>
            <person name="Van Dongen W.M."/>
            <person name="van Mierlo C.P."/>
            <person name="van Berkel W.J."/>
            <person name="Canters G.W."/>
        </authorList>
    </citation>
    <scope>X-RAY CRYSTALLOGRAPHY (2.25 ANGSTROMS) OF MUTANT ALA-70 IN COMPLEX WITH FMN</scope>
    <scope>COFACTOR</scope>
    <source>
        <strain>ATCC 478 / DSM 2289 / BCRC 14361 / JCM 21475 / KCTC 12137 / NBRC 102612 / NCIMB 12096 / NRRL B-14641 / VKM B-1617 / NRS 16</strain>
    </source>
</reference>
<protein>
    <recommendedName>
        <fullName evidence="6">Flavodoxin 2</fullName>
    </recommendedName>
    <alternativeName>
        <fullName evidence="6">AvFld 2</fullName>
    </alternativeName>
    <alternativeName>
        <fullName evidence="5">Flavodoxin II</fullName>
    </alternativeName>
</protein>
<feature type="initiator methionine" description="Removed" evidence="3 4">
    <location>
        <position position="1"/>
    </location>
</feature>
<feature type="chain" id="PRO_0000171605" description="Flavodoxin 2">
    <location>
        <begin position="2"/>
        <end position="180"/>
    </location>
</feature>
<feature type="domain" description="Flavodoxin-like" evidence="1">
    <location>
        <begin position="4"/>
        <end position="173"/>
    </location>
</feature>
<feature type="binding site" evidence="2 8">
    <location>
        <begin position="10"/>
        <end position="15"/>
    </location>
    <ligand>
        <name>FMN</name>
        <dbReference type="ChEBI" id="CHEBI:58210"/>
    </ligand>
</feature>
<feature type="binding site" evidence="2 8">
    <location>
        <position position="57"/>
    </location>
    <ligand>
        <name>FMN</name>
        <dbReference type="ChEBI" id="CHEBI:58210"/>
    </ligand>
</feature>
<feature type="binding site" evidence="2 8">
    <location>
        <position position="61"/>
    </location>
    <ligand>
        <name>FMN</name>
        <dbReference type="ChEBI" id="CHEBI:58210"/>
    </ligand>
</feature>
<feature type="binding site" evidence="2 8">
    <location>
        <position position="99"/>
    </location>
    <ligand>
        <name>FMN</name>
        <dbReference type="ChEBI" id="CHEBI:58210"/>
    </ligand>
</feature>
<feature type="binding site" evidence="2 8">
    <location>
        <begin position="106"/>
        <end position="108"/>
    </location>
    <ligand>
        <name>FMN</name>
        <dbReference type="ChEBI" id="CHEBI:58210"/>
    </ligand>
</feature>
<feature type="binding site" evidence="2 8">
    <location>
        <position position="155"/>
    </location>
    <ligand>
        <name>FMN</name>
        <dbReference type="ChEBI" id="CHEBI:58210"/>
    </ligand>
</feature>
<feature type="strand" evidence="10">
    <location>
        <begin position="4"/>
        <end position="8"/>
    </location>
</feature>
<feature type="strand" evidence="10">
    <location>
        <begin position="11"/>
        <end position="13"/>
    </location>
</feature>
<feature type="helix" evidence="10">
    <location>
        <begin position="14"/>
        <end position="23"/>
    </location>
</feature>
<feature type="turn" evidence="10">
    <location>
        <begin position="28"/>
        <end position="30"/>
    </location>
</feature>
<feature type="helix" evidence="10">
    <location>
        <begin position="37"/>
        <end position="39"/>
    </location>
</feature>
<feature type="helix" evidence="10">
    <location>
        <begin position="42"/>
        <end position="46"/>
    </location>
</feature>
<feature type="strand" evidence="10">
    <location>
        <begin position="49"/>
        <end position="56"/>
    </location>
</feature>
<feature type="turn" evidence="10">
    <location>
        <begin position="59"/>
        <end position="61"/>
    </location>
</feature>
<feature type="helix" evidence="10">
    <location>
        <begin position="66"/>
        <end position="68"/>
    </location>
</feature>
<feature type="helix" evidence="10">
    <location>
        <begin position="75"/>
        <end position="82"/>
    </location>
</feature>
<feature type="strand" evidence="10">
    <location>
        <begin position="91"/>
        <end position="97"/>
    </location>
</feature>
<feature type="turn" evidence="10">
    <location>
        <begin position="100"/>
        <end position="102"/>
    </location>
</feature>
<feature type="turn" evidence="9">
    <location>
        <begin position="104"/>
        <end position="108"/>
    </location>
</feature>
<feature type="helix" evidence="10">
    <location>
        <begin position="109"/>
        <end position="120"/>
    </location>
</feature>
<feature type="strand" evidence="9">
    <location>
        <begin position="124"/>
        <end position="126"/>
    </location>
</feature>
<feature type="strand" evidence="10">
    <location>
        <begin position="146"/>
        <end position="152"/>
    </location>
</feature>
<feature type="turn" evidence="10">
    <location>
        <begin position="154"/>
        <end position="156"/>
    </location>
</feature>
<feature type="helix" evidence="10">
    <location>
        <begin position="158"/>
        <end position="160"/>
    </location>
</feature>
<feature type="helix" evidence="10">
    <location>
        <begin position="161"/>
        <end position="176"/>
    </location>
</feature>